<proteinExistence type="inferred from homology"/>
<name>TRM82_EREGS</name>
<comment type="function">
    <text evidence="1">Required for the formation of N(7)-methylguanine at position 46 (m7G46) in tRNA. In the complex, it is required to stabilize and induce conformational changes of the catalytic subunit.</text>
</comment>
<comment type="pathway">
    <text evidence="1">tRNA modification; N(7)-methylguanine-tRNA biosynthesis.</text>
</comment>
<comment type="subunit">
    <text evidence="1">Forms a heterodimer with the catalytic subunit TRM8.</text>
</comment>
<comment type="subcellular location">
    <subcellularLocation>
        <location evidence="1">Nucleus</location>
    </subcellularLocation>
</comment>
<comment type="similarity">
    <text evidence="1">Belongs to the WD repeat TRM82 family.</text>
</comment>
<protein>
    <recommendedName>
        <fullName evidence="1">tRNA (guanine-N(7)-)-methyltransferase non-catalytic subunit TRM82</fullName>
    </recommendedName>
    <alternativeName>
        <fullName evidence="1">Transfer RNA methyltransferase 82</fullName>
    </alternativeName>
</protein>
<feature type="chain" id="PRO_0000370511" description="tRNA (guanine-N(7)-)-methyltransferase non-catalytic subunit TRM82">
    <location>
        <begin position="1"/>
        <end position="450"/>
    </location>
</feature>
<feature type="repeat" description="WD 1">
    <location>
        <begin position="108"/>
        <end position="147"/>
    </location>
</feature>
<feature type="repeat" description="WD 2">
    <location>
        <begin position="200"/>
        <end position="241"/>
    </location>
</feature>
<feature type="repeat" description="WD 3">
    <location>
        <begin position="245"/>
        <end position="285"/>
    </location>
</feature>
<feature type="region of interest" description="Disordered" evidence="2">
    <location>
        <begin position="69"/>
        <end position="103"/>
    </location>
</feature>
<feature type="compositionally biased region" description="Basic and acidic residues" evidence="2">
    <location>
        <begin position="69"/>
        <end position="82"/>
    </location>
</feature>
<accession>Q750U8</accession>
<organism>
    <name type="scientific">Eremothecium gossypii (strain ATCC 10895 / CBS 109.51 / FGSC 9923 / NRRL Y-1056)</name>
    <name type="common">Yeast</name>
    <name type="synonym">Ashbya gossypii</name>
    <dbReference type="NCBI Taxonomy" id="284811"/>
    <lineage>
        <taxon>Eukaryota</taxon>
        <taxon>Fungi</taxon>
        <taxon>Dikarya</taxon>
        <taxon>Ascomycota</taxon>
        <taxon>Saccharomycotina</taxon>
        <taxon>Saccharomycetes</taxon>
        <taxon>Saccharomycetales</taxon>
        <taxon>Saccharomycetaceae</taxon>
        <taxon>Eremothecium</taxon>
    </lineage>
</organism>
<reference key="1">
    <citation type="journal article" date="2004" name="Science">
        <title>The Ashbya gossypii genome as a tool for mapping the ancient Saccharomyces cerevisiae genome.</title>
        <authorList>
            <person name="Dietrich F.S."/>
            <person name="Voegeli S."/>
            <person name="Brachat S."/>
            <person name="Lerch A."/>
            <person name="Gates K."/>
            <person name="Steiner S."/>
            <person name="Mohr C."/>
            <person name="Poehlmann R."/>
            <person name="Luedi P."/>
            <person name="Choi S."/>
            <person name="Wing R.A."/>
            <person name="Flavier A."/>
            <person name="Gaffney T.D."/>
            <person name="Philippsen P."/>
        </authorList>
    </citation>
    <scope>NUCLEOTIDE SEQUENCE [LARGE SCALE GENOMIC DNA]</scope>
    <source>
        <strain>ATCC 10895 / CBS 109.51 / FGSC 9923 / NRRL Y-1056</strain>
    </source>
</reference>
<reference key="2">
    <citation type="journal article" date="2013" name="G3 (Bethesda)">
        <title>Genomes of Ashbya fungi isolated from insects reveal four mating-type loci, numerous translocations, lack of transposons, and distinct gene duplications.</title>
        <authorList>
            <person name="Dietrich F.S."/>
            <person name="Voegeli S."/>
            <person name="Kuo S."/>
            <person name="Philippsen P."/>
        </authorList>
    </citation>
    <scope>GENOME REANNOTATION</scope>
    <source>
        <strain>ATCC 10895 / CBS 109.51 / FGSC 9923 / NRRL Y-1056</strain>
    </source>
</reference>
<sequence length="450" mass="50564">MIHPIQFTLTNHDGTLLFCVIKNTIFAYKTNGEDGHLDLAGEWVDDYDSAELIKAKVEKEQQRRLAENAAKKLKTNEGEAIERPGNQRRVPLPGKDPKVPVPGPGAPPVYQYIRCLQLSHDEKMLVACTDSDKAAVFFRIELHKDNCLTLFKRQPFPKRPNAVTFADDDAKLLLADKFGDVYAVDSVGEPEKKDPEPILGHVSMLTDIALVTDTKKSYVITADRDEHIKISHYPQSFVIDKWLFGHKEFVSSLCVPEWQSSMLFSAGGDSFIATWDWQKGLLMSSFDYSTIVEPHLTDAHLPPARFLANDGSDRREASISKLLTFKDLPYLVAVPEMTKIVLLLQWDATSGELILSQTLALPLNVVSATVTSANHKLILSLDNREQPGKNFVKIFTLENGKFEEEQAASSSVDEAIVRNLSERPEVQTTVDDIYPLYHVSQLRKRGEHYS</sequence>
<keyword id="KW-0539">Nucleus</keyword>
<keyword id="KW-1185">Reference proteome</keyword>
<keyword id="KW-0677">Repeat</keyword>
<keyword id="KW-0819">tRNA processing</keyword>
<keyword id="KW-0853">WD repeat</keyword>
<evidence type="ECO:0000255" key="1">
    <source>
        <dbReference type="HAMAP-Rule" id="MF_03056"/>
    </source>
</evidence>
<evidence type="ECO:0000256" key="2">
    <source>
        <dbReference type="SAM" id="MobiDB-lite"/>
    </source>
</evidence>
<dbReference type="EMBL" id="AE016820">
    <property type="protein sequence ID" value="AAS54332.1"/>
    <property type="molecule type" value="Genomic_DNA"/>
</dbReference>
<dbReference type="RefSeq" id="NP_986508.1">
    <property type="nucleotide sequence ID" value="NM_211570.1"/>
</dbReference>
<dbReference type="SMR" id="Q750U8"/>
<dbReference type="FunCoup" id="Q750U8">
    <property type="interactions" value="278"/>
</dbReference>
<dbReference type="STRING" id="284811.Q750U8"/>
<dbReference type="EnsemblFungi" id="AAS54332">
    <property type="protein sequence ID" value="AAS54332"/>
    <property type="gene ID" value="AGOS_AGL159W"/>
</dbReference>
<dbReference type="GeneID" id="4622801"/>
<dbReference type="KEGG" id="ago:AGOS_AGL159W"/>
<dbReference type="eggNOG" id="KOG3914">
    <property type="taxonomic scope" value="Eukaryota"/>
</dbReference>
<dbReference type="HOGENOM" id="CLU_022082_0_0_1"/>
<dbReference type="InParanoid" id="Q750U8"/>
<dbReference type="OMA" id="VKHWLFG"/>
<dbReference type="OrthoDB" id="339900at2759"/>
<dbReference type="UniPathway" id="UPA00989"/>
<dbReference type="Proteomes" id="UP000000591">
    <property type="component" value="Chromosome VII"/>
</dbReference>
<dbReference type="GO" id="GO:0005829">
    <property type="term" value="C:cytosol"/>
    <property type="evidence" value="ECO:0000318"/>
    <property type="project" value="GO_Central"/>
</dbReference>
<dbReference type="GO" id="GO:0005634">
    <property type="term" value="C:nucleus"/>
    <property type="evidence" value="ECO:0000318"/>
    <property type="project" value="GO_Central"/>
</dbReference>
<dbReference type="GO" id="GO:0106143">
    <property type="term" value="C:tRNA (m7G46) methyltransferase complex"/>
    <property type="evidence" value="ECO:0007669"/>
    <property type="project" value="EnsemblFungi"/>
</dbReference>
<dbReference type="GO" id="GO:0043527">
    <property type="term" value="C:tRNA methyltransferase complex"/>
    <property type="evidence" value="ECO:0000318"/>
    <property type="project" value="GO_Central"/>
</dbReference>
<dbReference type="GO" id="GO:0008047">
    <property type="term" value="F:enzyme activator activity"/>
    <property type="evidence" value="ECO:0007669"/>
    <property type="project" value="EnsemblFungi"/>
</dbReference>
<dbReference type="GO" id="GO:0106004">
    <property type="term" value="P:tRNA (guanine-N7)-methylation"/>
    <property type="evidence" value="ECO:0007669"/>
    <property type="project" value="UniProtKB-UniRule"/>
</dbReference>
<dbReference type="GO" id="GO:0006400">
    <property type="term" value="P:tRNA modification"/>
    <property type="evidence" value="ECO:0000318"/>
    <property type="project" value="GO_Central"/>
</dbReference>
<dbReference type="FunFam" id="2.130.10.10:FF:002780">
    <property type="entry name" value="tRNA (guanine-N(7)-)-methyltransferase non-catalytic subunit TRM82"/>
    <property type="match status" value="1"/>
</dbReference>
<dbReference type="Gene3D" id="2.130.10.10">
    <property type="entry name" value="YVTN repeat-like/Quinoprotein amine dehydrogenase"/>
    <property type="match status" value="1"/>
</dbReference>
<dbReference type="HAMAP" id="MF_03056">
    <property type="entry name" value="TRM82"/>
    <property type="match status" value="1"/>
</dbReference>
<dbReference type="InterPro" id="IPR028884">
    <property type="entry name" value="Trm82"/>
</dbReference>
<dbReference type="InterPro" id="IPR015943">
    <property type="entry name" value="WD40/YVTN_repeat-like_dom_sf"/>
</dbReference>
<dbReference type="InterPro" id="IPR036322">
    <property type="entry name" value="WD40_repeat_dom_sf"/>
</dbReference>
<dbReference type="PANTHER" id="PTHR16288:SF0">
    <property type="entry name" value="TRNA (GUANINE-N(7)-)-METHYLTRANSFERASE NON-CATALYTIC SUBUNIT WDR4"/>
    <property type="match status" value="1"/>
</dbReference>
<dbReference type="PANTHER" id="PTHR16288">
    <property type="entry name" value="WD40 REPEAT PROTEIN 4"/>
    <property type="match status" value="1"/>
</dbReference>
<dbReference type="SUPFAM" id="SSF50978">
    <property type="entry name" value="WD40 repeat-like"/>
    <property type="match status" value="1"/>
</dbReference>
<dbReference type="PROSITE" id="PS50294">
    <property type="entry name" value="WD_REPEATS_REGION"/>
    <property type="match status" value="1"/>
</dbReference>
<gene>
    <name evidence="1" type="primary">TRM82</name>
    <name type="ordered locus">AGL159W</name>
</gene>